<comment type="function">
    <text evidence="1">Plays a role in the inhibition of host innate immunity by inducing the degradation of key host factors required to activate interferon production such as IRF3, IRF5 or IRF7. Associates with components of cullin RING ligases (CRLs) including CUL1 or CUL3, which are essential multisubunit ubiquitination complexes, to modulate their activities.</text>
</comment>
<comment type="subunit">
    <text evidence="1">Interacts (via C-terminus) with host IRF3; this interaction leads to IRF3 degradation. Interacts with host IRF7; this interaction leads to IRF7 degradation. Interacts with host CUL1 and CUL3.</text>
</comment>
<comment type="subcellular location">
    <subcellularLocation>
        <location evidence="1">Host cytoplasm</location>
        <location evidence="1">Host cytoskeleton</location>
    </subcellularLocation>
</comment>
<comment type="domain">
    <text evidence="1">The integrity of the zinc-binding domain in NSP1 is important for degradation of host IRF3.</text>
</comment>
<comment type="domain">
    <text evidence="1">The pLxIS motif targets host IRF3 for degradation; however phosphorylation of NSP1 pLxIS motif is not required for its activity.</text>
</comment>
<comment type="similarity">
    <text evidence="1">Belongs to the rotavirus NSP1 family.</text>
</comment>
<proteinExistence type="inferred from homology"/>
<evidence type="ECO:0000255" key="1">
    <source>
        <dbReference type="HAMAP-Rule" id="MF_04088"/>
    </source>
</evidence>
<reference key="1">
    <citation type="journal article" date="2000" name="J. Gen. Virol.">
        <title>Simian rhesus rotavirus is a unique heterologous (non-lapine) rotavirus strain capable of productive replication and horizontal transmission in rabbits.</title>
        <authorList>
            <person name="Ciarlet M."/>
            <person name="Estes M.K."/>
            <person name="Conner M.E."/>
        </authorList>
    </citation>
    <scope>NUCLEOTIDE SEQUENCE [GENOMIC RNA]</scope>
</reference>
<feature type="chain" id="PRO_0000369093" description="Non-structural protein 1">
    <location>
        <begin position="1"/>
        <end position="492"/>
    </location>
</feature>
<feature type="region of interest" description="RNA-binding" evidence="1">
    <location>
        <begin position="1"/>
        <end position="81"/>
    </location>
</feature>
<feature type="region of interest" description="Zinc-binding domain" evidence="1">
    <location>
        <begin position="42"/>
        <end position="79"/>
    </location>
</feature>
<feature type="region of interest" description="Important for cytoskeleton localization" evidence="1">
    <location>
        <begin position="82"/>
        <end position="176"/>
    </location>
</feature>
<feature type="region of interest" description="Interaction with host IRF3" evidence="1">
    <location>
        <begin position="318"/>
        <end position="492"/>
    </location>
</feature>
<feature type="short sequence motif" description="pLxIS motif" evidence="1">
    <location>
        <begin position="483"/>
        <end position="486"/>
    </location>
</feature>
<organismHost>
    <name type="scientific">Oryctolagus cuniculus</name>
    <name type="common">Rabbit</name>
    <dbReference type="NCBI Taxonomy" id="9986"/>
</organismHost>
<name>NSP1_ROTRA</name>
<dbReference type="EMBL" id="AF084549">
    <property type="protein sequence ID" value="AAD33100.1"/>
    <property type="molecule type" value="Genomic_RNA"/>
</dbReference>
<dbReference type="GO" id="GO:0030430">
    <property type="term" value="C:host cell cytoplasm"/>
    <property type="evidence" value="ECO:0007669"/>
    <property type="project" value="UniProtKB-UniRule"/>
</dbReference>
<dbReference type="GO" id="GO:0044163">
    <property type="term" value="C:host cytoskeleton"/>
    <property type="evidence" value="ECO:0007669"/>
    <property type="project" value="UniProtKB-SubCell"/>
</dbReference>
<dbReference type="GO" id="GO:0046872">
    <property type="term" value="F:metal ion binding"/>
    <property type="evidence" value="ECO:0007669"/>
    <property type="project" value="UniProtKB-UniRule"/>
</dbReference>
<dbReference type="GO" id="GO:0003723">
    <property type="term" value="F:RNA binding"/>
    <property type="evidence" value="ECO:0007669"/>
    <property type="project" value="UniProtKB-UniRule"/>
</dbReference>
<dbReference type="GO" id="GO:0039548">
    <property type="term" value="P:symbiont-mediated suppression of host cytoplasmic pattern recognition receptor signaling pathway via inhibition of IRF3 activity"/>
    <property type="evidence" value="ECO:0007669"/>
    <property type="project" value="UniProtKB-UniRule"/>
</dbReference>
<dbReference type="GO" id="GO:0039557">
    <property type="term" value="P:symbiont-mediated suppression of host cytoplasmic pattern recognition receptor signaling pathway via inhibition of IRF7 activity"/>
    <property type="evidence" value="ECO:0007669"/>
    <property type="project" value="UniProtKB-UniRule"/>
</dbReference>
<dbReference type="HAMAP" id="MF_04088">
    <property type="entry name" value="ROTA_NSP1"/>
    <property type="match status" value="1"/>
</dbReference>
<dbReference type="InterPro" id="IPR002148">
    <property type="entry name" value="Rotavirus_NSP1"/>
</dbReference>
<dbReference type="Pfam" id="PF00981">
    <property type="entry name" value="Rota_NS53"/>
    <property type="match status" value="1"/>
</dbReference>
<protein>
    <recommendedName>
        <fullName evidence="1">Non-structural protein 1</fullName>
        <shortName evidence="1">NSP1</shortName>
    </recommendedName>
    <alternativeName>
        <fullName evidence="1">NCVP2</fullName>
    </alternativeName>
    <alternativeName>
        <fullName evidence="1">Non-structural RNA-binding protein 53</fullName>
        <shortName evidence="1">NS53</shortName>
    </alternativeName>
</protein>
<keyword id="KW-1035">Host cytoplasm</keyword>
<keyword id="KW-1037">Host cytoskeleton</keyword>
<keyword id="KW-0945">Host-virus interaction</keyword>
<keyword id="KW-1090">Inhibition of host innate immune response by virus</keyword>
<keyword id="KW-1092">Inhibition of host IRF3 by virus</keyword>
<keyword id="KW-1093">Inhibition of host IRF7 by virus</keyword>
<keyword id="KW-1113">Inhibition of host RLR pathway by virus</keyword>
<keyword id="KW-0922">Interferon antiviral system evasion</keyword>
<keyword id="KW-0479">Metal-binding</keyword>
<keyword id="KW-0694">RNA-binding</keyword>
<keyword id="KW-0899">Viral immunoevasion</keyword>
<organism>
    <name type="scientific">Rotavirus A (strain RVA/Rabbit/United States/ALA/XXXX/G3P11[14])</name>
    <name type="common">RV-A</name>
    <name type="synonym">Rotavirus A (strain Alabama)</name>
    <dbReference type="NCBI Taxonomy" id="101359"/>
    <lineage>
        <taxon>Viruses</taxon>
        <taxon>Riboviria</taxon>
        <taxon>Orthornavirae</taxon>
        <taxon>Duplornaviricota</taxon>
        <taxon>Resentoviricetes</taxon>
        <taxon>Reovirales</taxon>
        <taxon>Sedoreoviridae</taxon>
        <taxon>Rotavirus</taxon>
        <taxon>Rotavirus A</taxon>
    </lineage>
</organism>
<accession>Q9WC80</accession>
<sequence>MATFKDACFHYRRVTKLNRELLRIGANSVWTPVSTNKIRGWCVECCQLTELTFCHGCSLAHVCQWCIQNKRCFLDNEPHLLKLRTFESPITKEKLQCIIDLYNLLFPINSSIVNKFKKTVKQRKCRNEFDKLWYNQLLLPITLNAAVFKFHSRKVYVFGFYEGSSPCVNLPYKLVNCIDLYDKLLLDQVNFERMSSLPSNLQSIYANKYFKLSRIPSMKLKQIYYSDFSKQNLINKYKFKSRIVLRNFTEFTWDFQLSLHYDLFNNKDKIFAALSTSSLKQFETHDLNLGRVKADVFELGRHCKPNYISSNHWQPASTISQCKWCNVKYAFRDMDWKMESMYNELLSFIQSCYKSNVSVGHCSSIERAYPLVKDVLWHSITKYIDQTIEKLFNVMNPVQVNNQKVISFHWQIDIALYTHIKMILKTERLPFTFTLDQFNSVIKGIVNQWCNVNELDNLPLCTEQTDTLVRLEEEGKLAEEYELLISDSEDDD</sequence>